<comment type="function">
    <text evidence="1">The glycine cleavage system catalyzes the degradation of glycine. The P protein binds the alpha-amino group of glycine through its pyridoxal phosphate cofactor; CO(2) is released and the remaining methylamine moiety is then transferred to the lipoamide cofactor of the H protein.</text>
</comment>
<comment type="catalytic activity">
    <reaction evidence="1">
        <text>N(6)-[(R)-lipoyl]-L-lysyl-[glycine-cleavage complex H protein] + glycine + H(+) = N(6)-[(R)-S(8)-aminomethyldihydrolipoyl]-L-lysyl-[glycine-cleavage complex H protein] + CO2</text>
        <dbReference type="Rhea" id="RHEA:24304"/>
        <dbReference type="Rhea" id="RHEA-COMP:10494"/>
        <dbReference type="Rhea" id="RHEA-COMP:10495"/>
        <dbReference type="ChEBI" id="CHEBI:15378"/>
        <dbReference type="ChEBI" id="CHEBI:16526"/>
        <dbReference type="ChEBI" id="CHEBI:57305"/>
        <dbReference type="ChEBI" id="CHEBI:83099"/>
        <dbReference type="ChEBI" id="CHEBI:83143"/>
        <dbReference type="EC" id="1.4.4.2"/>
    </reaction>
</comment>
<comment type="cofactor">
    <cofactor evidence="1">
        <name>pyridoxal 5'-phosphate</name>
        <dbReference type="ChEBI" id="CHEBI:597326"/>
    </cofactor>
</comment>
<comment type="subunit">
    <text evidence="1">The glycine cleavage system is composed of four proteins: P, T, L and H.</text>
</comment>
<comment type="similarity">
    <text evidence="1">Belongs to the GcvP family.</text>
</comment>
<proteinExistence type="inferred from homology"/>
<name>GCSP_BDEBA</name>
<sequence>MKIADLSPTNEFIPRHIGPTDSDIHEMLKTLGFNSLDQMADKVIPAQIRTTHAYADVGNGISEHGLLNHLKQMVSKNKVYKNYIGMGYHDTITPTVIQRNIFENPVWYTAYTPYQPEISQGRLEALLNFQTMIADLNGMEIANASLLDEGTAAAEAMFMAHSLCKNKANAFVVSPDMHPHVIEVIGTRAEPLGFEMIVMDPAKYDFAKPVFGVFFQYPNTNGTVEDYAAIAKKYKDHGALVTASTDLLAMTLLTPPGEWGADMVVGNSQRFGVPLGFGGPHAGFLATKDAFKRLMPGRLVGVSVDSQGKSALRLALQTREQHIRREKATSNICTAQVLLANMASMYAVYHGPAGLKKIALRVQRLTAILSAGLKKLNLEVGAGHVFDTVTVKTDKAAEIIAQAEKMQMNFRNYGGGKLGVSLNEATTLEDVEQIWAAFNLGKAAGFTALSVDESLADVTLPANLTRSTAYMTHQVFNSHHSETEMLRYIHHLQNKDLTLTHSMIPLGSCTMKLNATTELVPVSWPEISKLHPFAPTAQAVGLIEMIHDLEKKLCDITGFAAVSLQPNAGSQGEYAGLLVIRKYHQSRGQGHRNICLIPSSAHGTNPASAALVNMQVVVVACDDQGNVDVADLKAKAEQHKDNLAALMITYPSTHGVFEEGIVEICKIIHDNGGQVYMDGANMNALVGMCRPGVFGPDVSHMNLHKTFSIPHGGGGPGVGPIGVGAHLAEFLPKHSLVPEAGPANGISATTSAPWGSASILPISWAYITMMGAQGLRKATLVSILSANYIAKKLEAHYPVLYKGKNGLVAHECIVDVREIKKTSGIDVTDVAKRLMDFGFHAPTMSFPVAGTLMIEPTESESKKELDRFIESMVTIRKEIAAVETGKMDKENNALKNAPHTAQMLMKPEWNHPYSREEAVYPVEWLRGNKFWPVVGRVDNAYGDRNLICSCPSIEDYQA</sequence>
<reference key="1">
    <citation type="journal article" date="2004" name="Science">
        <title>A predator unmasked: life cycle of Bdellovibrio bacteriovorus from a genomic perspective.</title>
        <authorList>
            <person name="Rendulic S."/>
            <person name="Jagtap P."/>
            <person name="Rosinus A."/>
            <person name="Eppinger M."/>
            <person name="Baar C."/>
            <person name="Lanz C."/>
            <person name="Keller H."/>
            <person name="Lambert C."/>
            <person name="Evans K.J."/>
            <person name="Goesmann A."/>
            <person name="Meyer F."/>
            <person name="Sockett R.E."/>
            <person name="Schuster S.C."/>
        </authorList>
    </citation>
    <scope>NUCLEOTIDE SEQUENCE [LARGE SCALE GENOMIC DNA]</scope>
    <source>
        <strain>ATCC 15356 / DSM 50701 / NCIMB 9529 / HD100</strain>
    </source>
</reference>
<feature type="chain" id="PRO_0000227095" description="Glycine dehydrogenase (decarboxylating)">
    <location>
        <begin position="1"/>
        <end position="958"/>
    </location>
</feature>
<feature type="modified residue" description="N6-(pyridoxal phosphate)lysine" evidence="1">
    <location>
        <position position="705"/>
    </location>
</feature>
<gene>
    <name evidence="1" type="primary">gcvP</name>
    <name type="ordered locus">Bd0692</name>
</gene>
<protein>
    <recommendedName>
        <fullName evidence="1">Glycine dehydrogenase (decarboxylating)</fullName>
        <ecNumber evidence="1">1.4.4.2</ecNumber>
    </recommendedName>
    <alternativeName>
        <fullName evidence="1">Glycine cleavage system P-protein</fullName>
    </alternativeName>
    <alternativeName>
        <fullName evidence="1">Glycine decarboxylase</fullName>
    </alternativeName>
    <alternativeName>
        <fullName evidence="1">Glycine dehydrogenase (aminomethyl-transferring)</fullName>
    </alternativeName>
</protein>
<accession>Q6MPZ6</accession>
<organism>
    <name type="scientific">Bdellovibrio bacteriovorus (strain ATCC 15356 / DSM 50701 / NCIMB 9529 / HD100)</name>
    <dbReference type="NCBI Taxonomy" id="264462"/>
    <lineage>
        <taxon>Bacteria</taxon>
        <taxon>Pseudomonadati</taxon>
        <taxon>Bdellovibrionota</taxon>
        <taxon>Bdellovibrionia</taxon>
        <taxon>Bdellovibrionales</taxon>
        <taxon>Pseudobdellovibrionaceae</taxon>
        <taxon>Bdellovibrio</taxon>
    </lineage>
</organism>
<keyword id="KW-0560">Oxidoreductase</keyword>
<keyword id="KW-0663">Pyridoxal phosphate</keyword>
<keyword id="KW-1185">Reference proteome</keyword>
<dbReference type="EC" id="1.4.4.2" evidence="1"/>
<dbReference type="EMBL" id="BX842647">
    <property type="protein sequence ID" value="CAE78651.1"/>
    <property type="molecule type" value="Genomic_DNA"/>
</dbReference>
<dbReference type="RefSeq" id="WP_011163253.1">
    <property type="nucleotide sequence ID" value="NC_005363.1"/>
</dbReference>
<dbReference type="SMR" id="Q6MPZ6"/>
<dbReference type="STRING" id="264462.Bd0692"/>
<dbReference type="GeneID" id="93011780"/>
<dbReference type="KEGG" id="bba:Bd0692"/>
<dbReference type="eggNOG" id="COG0403">
    <property type="taxonomic scope" value="Bacteria"/>
</dbReference>
<dbReference type="eggNOG" id="COG1003">
    <property type="taxonomic scope" value="Bacteria"/>
</dbReference>
<dbReference type="HOGENOM" id="CLU_004620_2_1_7"/>
<dbReference type="Proteomes" id="UP000008080">
    <property type="component" value="Chromosome"/>
</dbReference>
<dbReference type="GO" id="GO:0005829">
    <property type="term" value="C:cytosol"/>
    <property type="evidence" value="ECO:0007669"/>
    <property type="project" value="TreeGrafter"/>
</dbReference>
<dbReference type="GO" id="GO:0005960">
    <property type="term" value="C:glycine cleavage complex"/>
    <property type="evidence" value="ECO:0007669"/>
    <property type="project" value="TreeGrafter"/>
</dbReference>
<dbReference type="GO" id="GO:0016594">
    <property type="term" value="F:glycine binding"/>
    <property type="evidence" value="ECO:0007669"/>
    <property type="project" value="TreeGrafter"/>
</dbReference>
<dbReference type="GO" id="GO:0004375">
    <property type="term" value="F:glycine dehydrogenase (decarboxylating) activity"/>
    <property type="evidence" value="ECO:0007669"/>
    <property type="project" value="UniProtKB-EC"/>
</dbReference>
<dbReference type="GO" id="GO:0030170">
    <property type="term" value="F:pyridoxal phosphate binding"/>
    <property type="evidence" value="ECO:0007669"/>
    <property type="project" value="TreeGrafter"/>
</dbReference>
<dbReference type="GO" id="GO:0019464">
    <property type="term" value="P:glycine decarboxylation via glycine cleavage system"/>
    <property type="evidence" value="ECO:0007669"/>
    <property type="project" value="UniProtKB-UniRule"/>
</dbReference>
<dbReference type="CDD" id="cd00613">
    <property type="entry name" value="GDC-P"/>
    <property type="match status" value="2"/>
</dbReference>
<dbReference type="FunFam" id="3.40.640.10:FF:000005">
    <property type="entry name" value="Glycine dehydrogenase (decarboxylating), mitochondrial"/>
    <property type="match status" value="1"/>
</dbReference>
<dbReference type="FunFam" id="3.90.1150.10:FF:000007">
    <property type="entry name" value="Glycine dehydrogenase (decarboxylating), mitochondrial"/>
    <property type="match status" value="1"/>
</dbReference>
<dbReference type="FunFam" id="3.40.640.10:FF:000007">
    <property type="entry name" value="glycine dehydrogenase (Decarboxylating), mitochondrial"/>
    <property type="match status" value="1"/>
</dbReference>
<dbReference type="Gene3D" id="3.90.1150.10">
    <property type="entry name" value="Aspartate Aminotransferase, domain 1"/>
    <property type="match status" value="2"/>
</dbReference>
<dbReference type="Gene3D" id="3.40.640.10">
    <property type="entry name" value="Type I PLP-dependent aspartate aminotransferase-like (Major domain)"/>
    <property type="match status" value="2"/>
</dbReference>
<dbReference type="HAMAP" id="MF_00711">
    <property type="entry name" value="GcvP"/>
    <property type="match status" value="1"/>
</dbReference>
<dbReference type="InterPro" id="IPR003437">
    <property type="entry name" value="GcvP"/>
</dbReference>
<dbReference type="InterPro" id="IPR049316">
    <property type="entry name" value="GDC-P_C"/>
</dbReference>
<dbReference type="InterPro" id="IPR049315">
    <property type="entry name" value="GDC-P_N"/>
</dbReference>
<dbReference type="InterPro" id="IPR020581">
    <property type="entry name" value="GDC_P"/>
</dbReference>
<dbReference type="InterPro" id="IPR015424">
    <property type="entry name" value="PyrdxlP-dep_Trfase"/>
</dbReference>
<dbReference type="InterPro" id="IPR015421">
    <property type="entry name" value="PyrdxlP-dep_Trfase_major"/>
</dbReference>
<dbReference type="InterPro" id="IPR015422">
    <property type="entry name" value="PyrdxlP-dep_Trfase_small"/>
</dbReference>
<dbReference type="NCBIfam" id="TIGR00461">
    <property type="entry name" value="gcvP"/>
    <property type="match status" value="1"/>
</dbReference>
<dbReference type="NCBIfam" id="NF003346">
    <property type="entry name" value="PRK04366.1"/>
    <property type="match status" value="1"/>
</dbReference>
<dbReference type="PANTHER" id="PTHR11773:SF1">
    <property type="entry name" value="GLYCINE DEHYDROGENASE (DECARBOXYLATING), MITOCHONDRIAL"/>
    <property type="match status" value="1"/>
</dbReference>
<dbReference type="PANTHER" id="PTHR11773">
    <property type="entry name" value="GLYCINE DEHYDROGENASE, DECARBOXYLATING"/>
    <property type="match status" value="1"/>
</dbReference>
<dbReference type="Pfam" id="PF21478">
    <property type="entry name" value="GcvP2_C"/>
    <property type="match status" value="1"/>
</dbReference>
<dbReference type="Pfam" id="PF02347">
    <property type="entry name" value="GDC-P"/>
    <property type="match status" value="2"/>
</dbReference>
<dbReference type="SUPFAM" id="SSF53383">
    <property type="entry name" value="PLP-dependent transferases"/>
    <property type="match status" value="2"/>
</dbReference>
<evidence type="ECO:0000255" key="1">
    <source>
        <dbReference type="HAMAP-Rule" id="MF_00711"/>
    </source>
</evidence>